<feature type="chain" id="PRO_1000146237" description="Adenine deaminase">
    <location>
        <begin position="1"/>
        <end position="588"/>
    </location>
</feature>
<gene>
    <name evidence="1" type="primary">ade</name>
    <name type="ordered locus">ECUMN_4192</name>
</gene>
<evidence type="ECO:0000255" key="1">
    <source>
        <dbReference type="HAMAP-Rule" id="MF_01518"/>
    </source>
</evidence>
<sequence>MNNSINHKFHHISRAEYQELLAVSRGDAVADYIIDNVSILDLINGGEISGPIVIKGRYIAGVGAEYTDAPALQRIDARGATAVPGFIDAHLHIESSMMTPVTFETATLPRGLTTVICDPHEIVNVMGEAGFAWFARCAEQARQNQYLQVSSCVPALEGCDVNGASFTLEQMLAWRDHPQVTGLAEMMDYPGVISGQNALLDKLDAFRHLTLDGHCPGLGGKELNAYIAAGIENCHESYQLEEGRRKLQLGMSLMIREGSAARNLNALAPLINEFNSPQCMLCTDDRNPWEIAHEGHIDALIRRLIEQHNVPLHVAYRVASWSTARHFGLNHLGLLAPGKQADIVLLSDARKVTVQQVLVKGEPIDAQTLQAEESARLAQSAPPYGNTIARQPVSASDFALQFTPGKRYRVIDVIHNELITHSRSSVYSENGFDRDDVCFIAVLERYGQRLAPACGLLGGFGLNEGALAATVSHDSHNIVVIGRSAEEMALAVNQVIQDGGGLCVVRNGQVQSHLPLPIAGLMSTDTAQSLAEQIDALKAAARECGPLPDEPFIQMAFLSLPVIPALKLTSQGLFDGEKFAFTTLEVTE</sequence>
<reference key="1">
    <citation type="journal article" date="2009" name="PLoS Genet.">
        <title>Organised genome dynamics in the Escherichia coli species results in highly diverse adaptive paths.</title>
        <authorList>
            <person name="Touchon M."/>
            <person name="Hoede C."/>
            <person name="Tenaillon O."/>
            <person name="Barbe V."/>
            <person name="Baeriswyl S."/>
            <person name="Bidet P."/>
            <person name="Bingen E."/>
            <person name="Bonacorsi S."/>
            <person name="Bouchier C."/>
            <person name="Bouvet O."/>
            <person name="Calteau A."/>
            <person name="Chiapello H."/>
            <person name="Clermont O."/>
            <person name="Cruveiller S."/>
            <person name="Danchin A."/>
            <person name="Diard M."/>
            <person name="Dossat C."/>
            <person name="Karoui M.E."/>
            <person name="Frapy E."/>
            <person name="Garry L."/>
            <person name="Ghigo J.M."/>
            <person name="Gilles A.M."/>
            <person name="Johnson J."/>
            <person name="Le Bouguenec C."/>
            <person name="Lescat M."/>
            <person name="Mangenot S."/>
            <person name="Martinez-Jehanne V."/>
            <person name="Matic I."/>
            <person name="Nassif X."/>
            <person name="Oztas S."/>
            <person name="Petit M.A."/>
            <person name="Pichon C."/>
            <person name="Rouy Z."/>
            <person name="Ruf C.S."/>
            <person name="Schneider D."/>
            <person name="Tourret J."/>
            <person name="Vacherie B."/>
            <person name="Vallenet D."/>
            <person name="Medigue C."/>
            <person name="Rocha E.P.C."/>
            <person name="Denamur E."/>
        </authorList>
    </citation>
    <scope>NUCLEOTIDE SEQUENCE [LARGE SCALE GENOMIC DNA]</scope>
    <source>
        <strain>UMN026 / ExPEC</strain>
    </source>
</reference>
<organism>
    <name type="scientific">Escherichia coli O17:K52:H18 (strain UMN026 / ExPEC)</name>
    <dbReference type="NCBI Taxonomy" id="585056"/>
    <lineage>
        <taxon>Bacteria</taxon>
        <taxon>Pseudomonadati</taxon>
        <taxon>Pseudomonadota</taxon>
        <taxon>Gammaproteobacteria</taxon>
        <taxon>Enterobacterales</taxon>
        <taxon>Enterobacteriaceae</taxon>
        <taxon>Escherichia</taxon>
    </lineage>
</organism>
<name>ADEC_ECOLU</name>
<protein>
    <recommendedName>
        <fullName evidence="1">Adenine deaminase</fullName>
        <shortName evidence="1">Adenase</shortName>
        <shortName evidence="1">Adenine aminase</shortName>
        <ecNumber evidence="1">3.5.4.2</ecNumber>
    </recommendedName>
</protein>
<accession>B7NEX9</accession>
<comment type="catalytic activity">
    <reaction evidence="1">
        <text>adenine + H2O + H(+) = hypoxanthine + NH4(+)</text>
        <dbReference type="Rhea" id="RHEA:23688"/>
        <dbReference type="ChEBI" id="CHEBI:15377"/>
        <dbReference type="ChEBI" id="CHEBI:15378"/>
        <dbReference type="ChEBI" id="CHEBI:16708"/>
        <dbReference type="ChEBI" id="CHEBI:17368"/>
        <dbReference type="ChEBI" id="CHEBI:28938"/>
        <dbReference type="EC" id="3.5.4.2"/>
    </reaction>
</comment>
<comment type="cofactor">
    <cofactor evidence="1">
        <name>Mn(2+)</name>
        <dbReference type="ChEBI" id="CHEBI:29035"/>
    </cofactor>
</comment>
<comment type="subunit">
    <text evidence="1">Homodimer.</text>
</comment>
<comment type="similarity">
    <text evidence="1">Belongs to the metallo-dependent hydrolases superfamily. Adenine deaminase family.</text>
</comment>
<dbReference type="EC" id="3.5.4.2" evidence="1"/>
<dbReference type="EMBL" id="CU928163">
    <property type="protein sequence ID" value="CAR15332.1"/>
    <property type="molecule type" value="Genomic_DNA"/>
</dbReference>
<dbReference type="RefSeq" id="YP_002414826.1">
    <property type="nucleotide sequence ID" value="NC_011751.1"/>
</dbReference>
<dbReference type="SMR" id="B7NEX9"/>
<dbReference type="STRING" id="585056.ECUMN_4192"/>
<dbReference type="KEGG" id="eum:ECUMN_4192"/>
<dbReference type="PATRIC" id="fig|585056.7.peg.4365"/>
<dbReference type="HOGENOM" id="CLU_027935_0_0_6"/>
<dbReference type="Proteomes" id="UP000007097">
    <property type="component" value="Chromosome"/>
</dbReference>
<dbReference type="GO" id="GO:0000034">
    <property type="term" value="F:adenine deaminase activity"/>
    <property type="evidence" value="ECO:0007669"/>
    <property type="project" value="UniProtKB-UniRule"/>
</dbReference>
<dbReference type="GO" id="GO:0006146">
    <property type="term" value="P:adenine catabolic process"/>
    <property type="evidence" value="ECO:0007669"/>
    <property type="project" value="InterPro"/>
</dbReference>
<dbReference type="CDD" id="cd01295">
    <property type="entry name" value="AdeC"/>
    <property type="match status" value="1"/>
</dbReference>
<dbReference type="FunFam" id="3.20.20.140:FF:000016">
    <property type="entry name" value="Adenine deaminase"/>
    <property type="match status" value="1"/>
</dbReference>
<dbReference type="Gene3D" id="3.20.20.140">
    <property type="entry name" value="Metal-dependent hydrolases"/>
    <property type="match status" value="1"/>
</dbReference>
<dbReference type="Gene3D" id="2.30.40.10">
    <property type="entry name" value="Urease, subunit C, domain 1"/>
    <property type="match status" value="1"/>
</dbReference>
<dbReference type="HAMAP" id="MF_01518">
    <property type="entry name" value="Adenine_deamin"/>
    <property type="match status" value="1"/>
</dbReference>
<dbReference type="InterPro" id="IPR006679">
    <property type="entry name" value="Adenine_deam"/>
</dbReference>
<dbReference type="InterPro" id="IPR026912">
    <property type="entry name" value="Adenine_deam_C"/>
</dbReference>
<dbReference type="InterPro" id="IPR006680">
    <property type="entry name" value="Amidohydro-rel"/>
</dbReference>
<dbReference type="InterPro" id="IPR011059">
    <property type="entry name" value="Metal-dep_hydrolase_composite"/>
</dbReference>
<dbReference type="InterPro" id="IPR032466">
    <property type="entry name" value="Metal_Hydrolase"/>
</dbReference>
<dbReference type="NCBIfam" id="TIGR01178">
    <property type="entry name" value="ade"/>
    <property type="match status" value="1"/>
</dbReference>
<dbReference type="NCBIfam" id="NF007457">
    <property type="entry name" value="PRK10027.1"/>
    <property type="match status" value="1"/>
</dbReference>
<dbReference type="PANTHER" id="PTHR11113:SF2">
    <property type="entry name" value="ADENINE DEAMINASE"/>
    <property type="match status" value="1"/>
</dbReference>
<dbReference type="PANTHER" id="PTHR11113">
    <property type="entry name" value="N-ACETYLGLUCOSAMINE-6-PHOSPHATE DEACETYLASE"/>
    <property type="match status" value="1"/>
</dbReference>
<dbReference type="Pfam" id="PF13382">
    <property type="entry name" value="Adenine_deam_C"/>
    <property type="match status" value="1"/>
</dbReference>
<dbReference type="Pfam" id="PF01979">
    <property type="entry name" value="Amidohydro_1"/>
    <property type="match status" value="1"/>
</dbReference>
<dbReference type="SUPFAM" id="SSF51338">
    <property type="entry name" value="Composite domain of metallo-dependent hydrolases"/>
    <property type="match status" value="1"/>
</dbReference>
<dbReference type="SUPFAM" id="SSF51556">
    <property type="entry name" value="Metallo-dependent hydrolases"/>
    <property type="match status" value="1"/>
</dbReference>
<keyword id="KW-0378">Hydrolase</keyword>
<keyword id="KW-0464">Manganese</keyword>
<proteinExistence type="inferred from homology"/>